<organism>
    <name type="scientific">Sulfolobus acidocaldarius (strain ATCC 33909 / DSM 639 / JCM 8929 / NBRC 15157 / NCIMB 11770)</name>
    <dbReference type="NCBI Taxonomy" id="330779"/>
    <lineage>
        <taxon>Archaea</taxon>
        <taxon>Thermoproteota</taxon>
        <taxon>Thermoprotei</taxon>
        <taxon>Sulfolobales</taxon>
        <taxon>Sulfolobaceae</taxon>
        <taxon>Sulfolobus</taxon>
    </lineage>
</organism>
<gene>
    <name type="primary">fusA</name>
    <name type="synonym">fus</name>
    <name type="ordered locus">Saci_0603</name>
</gene>
<evidence type="ECO:0000250" key="1"/>
<evidence type="ECO:0000269" key="2">
    <source>
    </source>
</evidence>
<evidence type="ECO:0000305" key="3"/>
<keyword id="KW-0002">3D-structure</keyword>
<keyword id="KW-0963">Cytoplasm</keyword>
<keyword id="KW-0903">Direct protein sequencing</keyword>
<keyword id="KW-0251">Elongation factor</keyword>
<keyword id="KW-0342">GTP-binding</keyword>
<keyword id="KW-0547">Nucleotide-binding</keyword>
<keyword id="KW-0648">Protein biosynthesis</keyword>
<keyword id="KW-1185">Reference proteome</keyword>
<name>EF2_SULAC</name>
<comment type="function">
    <text evidence="1">Catalyzes the GTP-dependent ribosomal translocation step during translation elongation. During this step, the ribosome changes from the pre-translocational (PRE) to the post-translocational (POST) state as the newly formed A-site-bound peptidyl-tRNA and P-site-bound deacylated tRNA move to the P and E sites, respectively. Catalyzes the coordinated movement of the two tRNA molecules, the mRNA and conformational changes in the ribosome (By similarity).</text>
</comment>
<comment type="subcellular location">
    <subcellularLocation>
        <location evidence="1">Cytoplasm</location>
    </subcellularLocation>
</comment>
<comment type="similarity">
    <text evidence="3">Belongs to the TRAFAC class translation factor GTPase superfamily. Classic translation factor GTPase family. EF-G/EF-2 subfamily.</text>
</comment>
<comment type="sequence caution" evidence="3">
    <conflict type="erroneous initiation">
        <sequence resource="EMBL-CDS" id="AAY79995"/>
    </conflict>
</comment>
<feature type="initiator methionine" description="Removed" evidence="2">
    <location>
        <position position="1"/>
    </location>
</feature>
<feature type="chain" id="PRO_0000091047" description="Elongation factor 2">
    <location>
        <begin position="2"/>
        <end position="737"/>
    </location>
</feature>
<feature type="domain" description="tr-type G">
    <location>
        <begin position="18"/>
        <end position="262"/>
    </location>
</feature>
<feature type="binding site" evidence="1">
    <location>
        <begin position="27"/>
        <end position="34"/>
    </location>
    <ligand>
        <name>GTP</name>
        <dbReference type="ChEBI" id="CHEBI:37565"/>
    </ligand>
</feature>
<feature type="binding site" evidence="1">
    <location>
        <begin position="93"/>
        <end position="97"/>
    </location>
    <ligand>
        <name>GTP</name>
        <dbReference type="ChEBI" id="CHEBI:37565"/>
    </ligand>
</feature>
<feature type="binding site" evidence="1">
    <location>
        <begin position="147"/>
        <end position="150"/>
    </location>
    <ligand>
        <name>GTP</name>
        <dbReference type="ChEBI" id="CHEBI:37565"/>
    </ligand>
</feature>
<feature type="modified residue" description="Diphthamide" evidence="1">
    <location>
        <position position="604"/>
    </location>
</feature>
<feature type="sequence conflict" description="In Ref. 1; CAA38716." evidence="3" ref="1">
    <original>E</original>
    <variation>G</variation>
    <location>
        <position position="138"/>
    </location>
</feature>
<reference key="1">
    <citation type="journal article" date="1991" name="Eur. J. Biochem.">
        <title>Gene for the ADP-ribosylatable elongation factor 2 from the extreme thermoacidophilic archaebacterium Sulfolobus acidocaldarius. Cloning, sequencing, comparative analysis.</title>
        <authorList>
            <person name="Schroeder J."/>
            <person name="Klink F."/>
        </authorList>
    </citation>
    <scope>NUCLEOTIDE SEQUENCE [GENOMIC DNA]</scope>
    <scope>PROTEIN SEQUENCE OF 2-14</scope>
    <source>
        <strain>ATCC 33909 / DSM 639 / JCM 8929 / NBRC 15157 / NCIMB 11770</strain>
    </source>
</reference>
<reference key="2">
    <citation type="journal article" date="2005" name="J. Bacteriol.">
        <title>The genome of Sulfolobus acidocaldarius, a model organism of the Crenarchaeota.</title>
        <authorList>
            <person name="Chen L."/>
            <person name="Bruegger K."/>
            <person name="Skovgaard M."/>
            <person name="Redder P."/>
            <person name="She Q."/>
            <person name="Torarinsson E."/>
            <person name="Greve B."/>
            <person name="Awayez M."/>
            <person name="Zibat A."/>
            <person name="Klenk H.-P."/>
            <person name="Garrett R.A."/>
        </authorList>
    </citation>
    <scope>NUCLEOTIDE SEQUENCE [LARGE SCALE GENOMIC DNA]</scope>
    <source>
        <strain>ATCC 33909 / DSM 639 / JCM 8929 / NBRC 15157 / NCIMB 11770</strain>
    </source>
</reference>
<dbReference type="EMBL" id="X54972">
    <property type="protein sequence ID" value="CAA38716.1"/>
    <property type="molecule type" value="Genomic_DNA"/>
</dbReference>
<dbReference type="EMBL" id="CP000077">
    <property type="protein sequence ID" value="AAY79995.1"/>
    <property type="status" value="ALT_INIT"/>
    <property type="molecule type" value="Genomic_DNA"/>
</dbReference>
<dbReference type="PIR" id="S14408">
    <property type="entry name" value="S14408"/>
</dbReference>
<dbReference type="RefSeq" id="WP_015385460.1">
    <property type="nucleotide sequence ID" value="NC_007181.1"/>
</dbReference>
<dbReference type="PDB" id="8HL1">
    <property type="method" value="EM"/>
    <property type="resolution" value="3.93 A"/>
    <property type="chains" value="AEFG=7-735"/>
</dbReference>
<dbReference type="PDB" id="8HL2">
    <property type="method" value="EM"/>
    <property type="resolution" value="4.10 A"/>
    <property type="chains" value="AEFG=7-735"/>
</dbReference>
<dbReference type="PDB" id="8HL3">
    <property type="method" value="EM"/>
    <property type="resolution" value="4.80 A"/>
    <property type="chains" value="AEFG=7-735"/>
</dbReference>
<dbReference type="PDB" id="8HL4">
    <property type="method" value="EM"/>
    <property type="resolution" value="4.62 A"/>
    <property type="chains" value="AEFG=7-735"/>
</dbReference>
<dbReference type="PDBsum" id="8HL1"/>
<dbReference type="PDBsum" id="8HL2"/>
<dbReference type="PDBsum" id="8HL3"/>
<dbReference type="PDBsum" id="8HL4"/>
<dbReference type="EMDB" id="EMD-34866"/>
<dbReference type="EMDB" id="EMD-34867"/>
<dbReference type="EMDB" id="EMD-34868"/>
<dbReference type="EMDB" id="EMD-34869"/>
<dbReference type="SMR" id="P23112"/>
<dbReference type="STRING" id="330779.Saci_0603"/>
<dbReference type="GeneID" id="14551124"/>
<dbReference type="KEGG" id="sai:Saci_0603"/>
<dbReference type="PATRIC" id="fig|330779.12.peg.582"/>
<dbReference type="eggNOG" id="arCOG01559">
    <property type="taxonomic scope" value="Archaea"/>
</dbReference>
<dbReference type="HOGENOM" id="CLU_002794_11_1_2"/>
<dbReference type="Proteomes" id="UP000001018">
    <property type="component" value="Chromosome"/>
</dbReference>
<dbReference type="GO" id="GO:0005829">
    <property type="term" value="C:cytosol"/>
    <property type="evidence" value="ECO:0007669"/>
    <property type="project" value="TreeGrafter"/>
</dbReference>
<dbReference type="GO" id="GO:1990904">
    <property type="term" value="C:ribonucleoprotein complex"/>
    <property type="evidence" value="ECO:0007669"/>
    <property type="project" value="TreeGrafter"/>
</dbReference>
<dbReference type="GO" id="GO:0005525">
    <property type="term" value="F:GTP binding"/>
    <property type="evidence" value="ECO:0007669"/>
    <property type="project" value="UniProtKB-UniRule"/>
</dbReference>
<dbReference type="GO" id="GO:0003924">
    <property type="term" value="F:GTPase activity"/>
    <property type="evidence" value="ECO:0007669"/>
    <property type="project" value="InterPro"/>
</dbReference>
<dbReference type="GO" id="GO:0003746">
    <property type="term" value="F:translation elongation factor activity"/>
    <property type="evidence" value="ECO:0007669"/>
    <property type="project" value="UniProtKB-UniRule"/>
</dbReference>
<dbReference type="CDD" id="cd01681">
    <property type="entry name" value="aeEF2_snRNP_like_IV"/>
    <property type="match status" value="1"/>
</dbReference>
<dbReference type="CDD" id="cd01885">
    <property type="entry name" value="EF2"/>
    <property type="match status" value="1"/>
</dbReference>
<dbReference type="CDD" id="cd16268">
    <property type="entry name" value="EF2_II"/>
    <property type="match status" value="1"/>
</dbReference>
<dbReference type="CDD" id="cd16261">
    <property type="entry name" value="EF2_snRNP_III"/>
    <property type="match status" value="1"/>
</dbReference>
<dbReference type="CDD" id="cd01514">
    <property type="entry name" value="Elongation_Factor_C"/>
    <property type="match status" value="1"/>
</dbReference>
<dbReference type="FunFam" id="3.30.230.10:FF:000009">
    <property type="entry name" value="116 kDa U5 small nuclear ribonucleoprotein component"/>
    <property type="match status" value="1"/>
</dbReference>
<dbReference type="FunFam" id="3.40.50.300:FF:000684">
    <property type="entry name" value="Elongation factor 2"/>
    <property type="match status" value="1"/>
</dbReference>
<dbReference type="FunFam" id="3.30.70.870:FF:000002">
    <property type="entry name" value="Translation elongation factor 2"/>
    <property type="match status" value="1"/>
</dbReference>
<dbReference type="Gene3D" id="3.30.230.10">
    <property type="match status" value="1"/>
</dbReference>
<dbReference type="Gene3D" id="3.30.70.240">
    <property type="match status" value="1"/>
</dbReference>
<dbReference type="Gene3D" id="3.30.70.870">
    <property type="entry name" value="Elongation Factor G (Translational Gtpase), domain 3"/>
    <property type="match status" value="1"/>
</dbReference>
<dbReference type="Gene3D" id="3.40.50.300">
    <property type="entry name" value="P-loop containing nucleotide triphosphate hydrolases"/>
    <property type="match status" value="1"/>
</dbReference>
<dbReference type="Gene3D" id="2.40.30.10">
    <property type="entry name" value="Translation factors"/>
    <property type="match status" value="1"/>
</dbReference>
<dbReference type="HAMAP" id="MF_00054_A">
    <property type="entry name" value="EF_G_EF_2_A"/>
    <property type="match status" value="1"/>
</dbReference>
<dbReference type="InterPro" id="IPR041095">
    <property type="entry name" value="EFG_II"/>
</dbReference>
<dbReference type="InterPro" id="IPR035647">
    <property type="entry name" value="EFG_III/V"/>
</dbReference>
<dbReference type="InterPro" id="IPR000640">
    <property type="entry name" value="EFG_V-like"/>
</dbReference>
<dbReference type="InterPro" id="IPR004161">
    <property type="entry name" value="EFTu-like_2"/>
</dbReference>
<dbReference type="InterPro" id="IPR031157">
    <property type="entry name" value="G_TR_CS"/>
</dbReference>
<dbReference type="InterPro" id="IPR027417">
    <property type="entry name" value="P-loop_NTPase"/>
</dbReference>
<dbReference type="InterPro" id="IPR020568">
    <property type="entry name" value="Ribosomal_Su5_D2-typ_SF"/>
</dbReference>
<dbReference type="InterPro" id="IPR014721">
    <property type="entry name" value="Ribsml_uS5_D2-typ_fold_subgr"/>
</dbReference>
<dbReference type="InterPro" id="IPR005225">
    <property type="entry name" value="Small_GTP-bd"/>
</dbReference>
<dbReference type="InterPro" id="IPR000795">
    <property type="entry name" value="T_Tr_GTP-bd_dom"/>
</dbReference>
<dbReference type="InterPro" id="IPR009000">
    <property type="entry name" value="Transl_B-barrel_sf"/>
</dbReference>
<dbReference type="InterPro" id="IPR004543">
    <property type="entry name" value="Transl_elong_EFG/EF2_arc"/>
</dbReference>
<dbReference type="InterPro" id="IPR005517">
    <property type="entry name" value="Transl_elong_EFG/EF2_IV"/>
</dbReference>
<dbReference type="NCBIfam" id="TIGR00490">
    <property type="entry name" value="aEF-2"/>
    <property type="match status" value="1"/>
</dbReference>
<dbReference type="NCBIfam" id="TIGR00231">
    <property type="entry name" value="small_GTP"/>
    <property type="match status" value="1"/>
</dbReference>
<dbReference type="PANTHER" id="PTHR42908:SF3">
    <property type="entry name" value="ELONGATION FACTOR-LIKE GTPASE 1"/>
    <property type="match status" value="1"/>
</dbReference>
<dbReference type="PANTHER" id="PTHR42908">
    <property type="entry name" value="TRANSLATION ELONGATION FACTOR-RELATED"/>
    <property type="match status" value="1"/>
</dbReference>
<dbReference type="Pfam" id="PF00679">
    <property type="entry name" value="EFG_C"/>
    <property type="match status" value="1"/>
</dbReference>
<dbReference type="Pfam" id="PF14492">
    <property type="entry name" value="EFG_III"/>
    <property type="match status" value="1"/>
</dbReference>
<dbReference type="Pfam" id="PF03764">
    <property type="entry name" value="EFG_IV"/>
    <property type="match status" value="1"/>
</dbReference>
<dbReference type="Pfam" id="PF00009">
    <property type="entry name" value="GTP_EFTU"/>
    <property type="match status" value="1"/>
</dbReference>
<dbReference type="Pfam" id="PF03144">
    <property type="entry name" value="GTP_EFTU_D2"/>
    <property type="match status" value="1"/>
</dbReference>
<dbReference type="PRINTS" id="PR00315">
    <property type="entry name" value="ELONGATNFCT"/>
</dbReference>
<dbReference type="SMART" id="SM00838">
    <property type="entry name" value="EFG_C"/>
    <property type="match status" value="1"/>
</dbReference>
<dbReference type="SMART" id="SM00889">
    <property type="entry name" value="EFG_IV"/>
    <property type="match status" value="1"/>
</dbReference>
<dbReference type="SUPFAM" id="SSF54980">
    <property type="entry name" value="EF-G C-terminal domain-like"/>
    <property type="match status" value="2"/>
</dbReference>
<dbReference type="SUPFAM" id="SSF52540">
    <property type="entry name" value="P-loop containing nucleoside triphosphate hydrolases"/>
    <property type="match status" value="1"/>
</dbReference>
<dbReference type="SUPFAM" id="SSF54211">
    <property type="entry name" value="Ribosomal protein S5 domain 2-like"/>
    <property type="match status" value="1"/>
</dbReference>
<dbReference type="SUPFAM" id="SSF50447">
    <property type="entry name" value="Translation proteins"/>
    <property type="match status" value="1"/>
</dbReference>
<dbReference type="PROSITE" id="PS00301">
    <property type="entry name" value="G_TR_1"/>
    <property type="match status" value="1"/>
</dbReference>
<dbReference type="PROSITE" id="PS51722">
    <property type="entry name" value="G_TR_2"/>
    <property type="match status" value="1"/>
</dbReference>
<protein>
    <recommendedName>
        <fullName>Elongation factor 2</fullName>
        <shortName>EF-2</shortName>
    </recommendedName>
</protein>
<proteinExistence type="evidence at protein level"/>
<accession>P23112</accession>
<accession>Q4JB34</accession>
<sequence length="737" mass="81978">MPRYKTVEQVLSLMKDVTRVRNIGIIAHVDHGKTTTSDTLLAASGIISQKVAGEALALDYLSVEQQRGITVKAANISLYHEIDGKGYVINLIDTPGHVDFSGRVTRSLRVLDGSIVVIDAVEGIMTQTETVLRQSLEERVRPILFINKVDRLIKELKLSSQEIQKRLIDLIIEVNNLIETYGEPEFKDQWKIKPELGNVVFGSAKDKWGFSVPMAGKRGVKFSDVVNAYTSGDKAKIEELASKVPIHEALLDAVIKFVPNPRDSQKYRIPKIWKGDLDSEIAKAMINADPNGPIVMMINDMKVDPHAGLVATGRVFSGTLRAGEEVWLVNAKRQQRILQVSLYMGAIRELAEEIPVGNIAAALGMDAARSGETGVDIRFKDSVLGSFEKLHYISEPVVTISVEPRNPKDLTKMIDALRKLSIEDSNLVVKINEETGEYLLSGMGFLHLEVSLQLLKENYGLDVVTTPPIVVYRESIRNKSQVFEGKSPNKHNKLYISVEPLNNQTIDLIANGTIKEDMDNKEMAKILRDQAEWDYDEAKKIVAIDENINVFIDATSGVQHLREIMDTLLQGFRLAMKEGPLAFEPVRGVKVVLHDAVVHEDPAHRGPAQLYPAVRNAIFAGILTSKPTLLEPLQKLDIRIPMEYLGNVTAVITRKRGKVINVVQTGNVARVYAEIPVGESFELASELRASSAGRAFWGTEFSRWAPVPDSILVDLIMKIRERKGKPKQLPKVEDFIS</sequence>